<feature type="chain" id="PRO_0000192235" description="Ribosomal protein L11 methyltransferase">
    <location>
        <begin position="1"/>
        <end position="280"/>
    </location>
</feature>
<feature type="binding site" evidence="1">
    <location>
        <position position="131"/>
    </location>
    <ligand>
        <name>S-adenosyl-L-methionine</name>
        <dbReference type="ChEBI" id="CHEBI:59789"/>
    </ligand>
</feature>
<feature type="binding site" evidence="1">
    <location>
        <position position="152"/>
    </location>
    <ligand>
        <name>S-adenosyl-L-methionine</name>
        <dbReference type="ChEBI" id="CHEBI:59789"/>
    </ligand>
</feature>
<feature type="binding site" evidence="1">
    <location>
        <position position="174"/>
    </location>
    <ligand>
        <name>S-adenosyl-L-methionine</name>
        <dbReference type="ChEBI" id="CHEBI:59789"/>
    </ligand>
</feature>
<feature type="binding site" evidence="1">
    <location>
        <position position="217"/>
    </location>
    <ligand>
        <name>S-adenosyl-L-methionine</name>
        <dbReference type="ChEBI" id="CHEBI:59789"/>
    </ligand>
</feature>
<reference key="1">
    <citation type="journal article" date="2004" name="Proc. Natl. Acad. Sci. U.S.A.">
        <title>Genomic analysis of Bacteroides fragilis reveals extensive DNA inversions regulating cell surface adaptation.</title>
        <authorList>
            <person name="Kuwahara T."/>
            <person name="Yamashita A."/>
            <person name="Hirakawa H."/>
            <person name="Nakayama H."/>
            <person name="Toh H."/>
            <person name="Okada N."/>
            <person name="Kuhara S."/>
            <person name="Hattori M."/>
            <person name="Hayashi T."/>
            <person name="Ohnishi Y."/>
        </authorList>
    </citation>
    <scope>NUCLEOTIDE SEQUENCE [LARGE SCALE GENOMIC DNA]</scope>
    <source>
        <strain>YCH46</strain>
    </source>
</reference>
<name>PRMA_BACFR</name>
<sequence>MKYFEFTFDTHPCTETVNDVLAAVLGEAGFESFVEREGGLTAYIQQSLYNEETLKTELANFPVPDTEISYTFAEAEDKDWNEEWEKNFFQPIVIGDRCVIHSTFHQDVPKAEYDILINPQMAFGTGHHETTSLIIGELLDSELTGKSLLDMGCGTSILAILARMRGAKPCTAIDIDEWCVRNSIENIELNGVTDIAVSQGDASALQGKGPFDVVIANINRNILLNDMKQYVACMHPGSELFMSGFYIDDIPAIRREAEKHGLTFVHHQEKNRWAAVKFVL</sequence>
<comment type="function">
    <text evidence="1">Methylates ribosomal protein L11.</text>
</comment>
<comment type="catalytic activity">
    <reaction evidence="1">
        <text>L-lysyl-[protein] + 3 S-adenosyl-L-methionine = N(6),N(6),N(6)-trimethyl-L-lysyl-[protein] + 3 S-adenosyl-L-homocysteine + 3 H(+)</text>
        <dbReference type="Rhea" id="RHEA:54192"/>
        <dbReference type="Rhea" id="RHEA-COMP:9752"/>
        <dbReference type="Rhea" id="RHEA-COMP:13826"/>
        <dbReference type="ChEBI" id="CHEBI:15378"/>
        <dbReference type="ChEBI" id="CHEBI:29969"/>
        <dbReference type="ChEBI" id="CHEBI:57856"/>
        <dbReference type="ChEBI" id="CHEBI:59789"/>
        <dbReference type="ChEBI" id="CHEBI:61961"/>
    </reaction>
</comment>
<comment type="subcellular location">
    <subcellularLocation>
        <location evidence="1">Cytoplasm</location>
    </subcellularLocation>
</comment>
<comment type="similarity">
    <text evidence="1">Belongs to the methyltransferase superfamily. PrmA family.</text>
</comment>
<gene>
    <name evidence="1" type="primary">prmA</name>
    <name type="ordered locus">BF1624</name>
</gene>
<organism>
    <name type="scientific">Bacteroides fragilis (strain YCH46)</name>
    <dbReference type="NCBI Taxonomy" id="295405"/>
    <lineage>
        <taxon>Bacteria</taxon>
        <taxon>Pseudomonadati</taxon>
        <taxon>Bacteroidota</taxon>
        <taxon>Bacteroidia</taxon>
        <taxon>Bacteroidales</taxon>
        <taxon>Bacteroidaceae</taxon>
        <taxon>Bacteroides</taxon>
    </lineage>
</organism>
<evidence type="ECO:0000255" key="1">
    <source>
        <dbReference type="HAMAP-Rule" id="MF_00735"/>
    </source>
</evidence>
<accession>Q64VV4</accession>
<keyword id="KW-0963">Cytoplasm</keyword>
<keyword id="KW-0489">Methyltransferase</keyword>
<keyword id="KW-0949">S-adenosyl-L-methionine</keyword>
<keyword id="KW-0808">Transferase</keyword>
<protein>
    <recommendedName>
        <fullName evidence="1">Ribosomal protein L11 methyltransferase</fullName>
        <shortName evidence="1">L11 Mtase</shortName>
        <ecNumber evidence="1">2.1.1.-</ecNumber>
    </recommendedName>
</protein>
<dbReference type="EC" id="2.1.1.-" evidence="1"/>
<dbReference type="EMBL" id="AP006841">
    <property type="protein sequence ID" value="BAD48372.1"/>
    <property type="molecule type" value="Genomic_DNA"/>
</dbReference>
<dbReference type="RefSeq" id="WP_005795115.1">
    <property type="nucleotide sequence ID" value="NC_006347.1"/>
</dbReference>
<dbReference type="RefSeq" id="YP_098906.1">
    <property type="nucleotide sequence ID" value="NC_006347.1"/>
</dbReference>
<dbReference type="SMR" id="Q64VV4"/>
<dbReference type="STRING" id="295405.BF1624"/>
<dbReference type="GeneID" id="60367034"/>
<dbReference type="KEGG" id="bfr:BF1624"/>
<dbReference type="PATRIC" id="fig|295405.11.peg.1578"/>
<dbReference type="HOGENOM" id="CLU_049382_0_0_10"/>
<dbReference type="OrthoDB" id="9785995at2"/>
<dbReference type="Proteomes" id="UP000002197">
    <property type="component" value="Chromosome"/>
</dbReference>
<dbReference type="GO" id="GO:0005737">
    <property type="term" value="C:cytoplasm"/>
    <property type="evidence" value="ECO:0007669"/>
    <property type="project" value="UniProtKB-SubCell"/>
</dbReference>
<dbReference type="GO" id="GO:0016279">
    <property type="term" value="F:protein-lysine N-methyltransferase activity"/>
    <property type="evidence" value="ECO:0007669"/>
    <property type="project" value="RHEA"/>
</dbReference>
<dbReference type="GO" id="GO:0032259">
    <property type="term" value="P:methylation"/>
    <property type="evidence" value="ECO:0007669"/>
    <property type="project" value="UniProtKB-KW"/>
</dbReference>
<dbReference type="CDD" id="cd02440">
    <property type="entry name" value="AdoMet_MTases"/>
    <property type="match status" value="1"/>
</dbReference>
<dbReference type="Gene3D" id="3.40.50.150">
    <property type="entry name" value="Vaccinia Virus protein VP39"/>
    <property type="match status" value="1"/>
</dbReference>
<dbReference type="HAMAP" id="MF_00735">
    <property type="entry name" value="Methyltr_PrmA"/>
    <property type="match status" value="1"/>
</dbReference>
<dbReference type="InterPro" id="IPR050078">
    <property type="entry name" value="Ribosomal_L11_MeTrfase_PrmA"/>
</dbReference>
<dbReference type="InterPro" id="IPR004498">
    <property type="entry name" value="Ribosomal_PrmA_MeTrfase"/>
</dbReference>
<dbReference type="InterPro" id="IPR029063">
    <property type="entry name" value="SAM-dependent_MTases_sf"/>
</dbReference>
<dbReference type="NCBIfam" id="NF001785">
    <property type="entry name" value="PRK00517.2-2"/>
    <property type="match status" value="1"/>
</dbReference>
<dbReference type="PANTHER" id="PTHR43648">
    <property type="entry name" value="ELECTRON TRANSFER FLAVOPROTEIN BETA SUBUNIT LYSINE METHYLTRANSFERASE"/>
    <property type="match status" value="1"/>
</dbReference>
<dbReference type="PANTHER" id="PTHR43648:SF1">
    <property type="entry name" value="ELECTRON TRANSFER FLAVOPROTEIN BETA SUBUNIT LYSINE METHYLTRANSFERASE"/>
    <property type="match status" value="1"/>
</dbReference>
<dbReference type="Pfam" id="PF06325">
    <property type="entry name" value="PrmA"/>
    <property type="match status" value="1"/>
</dbReference>
<dbReference type="PIRSF" id="PIRSF000401">
    <property type="entry name" value="RPL11_MTase"/>
    <property type="match status" value="1"/>
</dbReference>
<dbReference type="SUPFAM" id="SSF53335">
    <property type="entry name" value="S-adenosyl-L-methionine-dependent methyltransferases"/>
    <property type="match status" value="1"/>
</dbReference>
<proteinExistence type="inferred from homology"/>